<sequence length="320" mass="34915">MIKKIGVLTSGGDAPGMNAAIRGVVRAALTEGLEVMGIYDGYLGLYEDRMVQLDRYSVSDMINRGGTFLGSARFPEFRDENIRAVAIENLKKRGIDALVVIGGDGSYMGAKRLTEMGFPCIGLPGTIDNDIKGTDYTIGYFTALGTVVEAIDRLRDTSSSHQRISIVEVMGRYCGDLTLAAAIAGGCEFIVVPEVEFNREDLVAEIKAGIAKGKKHAIVAITEHMCDVDELAHFIEKETGRETRATVLGHIQRGGSPVPYDRILASRMGAYAIDLLLEGHGGRCVGIQNEQLVHHDIIDAIENMKRPFKSDWMECAKKLY</sequence>
<keyword id="KW-0021">Allosteric enzyme</keyword>
<keyword id="KW-0067">ATP-binding</keyword>
<keyword id="KW-0963">Cytoplasm</keyword>
<keyword id="KW-0324">Glycolysis</keyword>
<keyword id="KW-0418">Kinase</keyword>
<keyword id="KW-0460">Magnesium</keyword>
<keyword id="KW-0479">Metal-binding</keyword>
<keyword id="KW-0547">Nucleotide-binding</keyword>
<keyword id="KW-0808">Transferase</keyword>
<evidence type="ECO:0000255" key="1">
    <source>
        <dbReference type="HAMAP-Rule" id="MF_00339"/>
    </source>
</evidence>
<dbReference type="EC" id="2.7.1.11" evidence="1"/>
<dbReference type="EMBL" id="AE017220">
    <property type="protein sequence ID" value="AAX67859.1"/>
    <property type="molecule type" value="Genomic_DNA"/>
</dbReference>
<dbReference type="RefSeq" id="WP_000591793.1">
    <property type="nucleotide sequence ID" value="NC_006905.1"/>
</dbReference>
<dbReference type="SMR" id="Q57HF3"/>
<dbReference type="GeneID" id="66758327"/>
<dbReference type="KEGG" id="sec:SCH_3953"/>
<dbReference type="HOGENOM" id="CLU_020655_0_1_6"/>
<dbReference type="UniPathway" id="UPA00109">
    <property type="reaction ID" value="UER00182"/>
</dbReference>
<dbReference type="Proteomes" id="UP000000538">
    <property type="component" value="Chromosome"/>
</dbReference>
<dbReference type="GO" id="GO:0005945">
    <property type="term" value="C:6-phosphofructokinase complex"/>
    <property type="evidence" value="ECO:0007669"/>
    <property type="project" value="TreeGrafter"/>
</dbReference>
<dbReference type="GO" id="GO:0003872">
    <property type="term" value="F:6-phosphofructokinase activity"/>
    <property type="evidence" value="ECO:0007669"/>
    <property type="project" value="UniProtKB-UniRule"/>
</dbReference>
<dbReference type="GO" id="GO:0016208">
    <property type="term" value="F:AMP binding"/>
    <property type="evidence" value="ECO:0007669"/>
    <property type="project" value="TreeGrafter"/>
</dbReference>
<dbReference type="GO" id="GO:0005524">
    <property type="term" value="F:ATP binding"/>
    <property type="evidence" value="ECO:0007669"/>
    <property type="project" value="UniProtKB-KW"/>
</dbReference>
<dbReference type="GO" id="GO:0070095">
    <property type="term" value="F:fructose-6-phosphate binding"/>
    <property type="evidence" value="ECO:0007669"/>
    <property type="project" value="TreeGrafter"/>
</dbReference>
<dbReference type="GO" id="GO:0042802">
    <property type="term" value="F:identical protein binding"/>
    <property type="evidence" value="ECO:0007669"/>
    <property type="project" value="TreeGrafter"/>
</dbReference>
<dbReference type="GO" id="GO:0046872">
    <property type="term" value="F:metal ion binding"/>
    <property type="evidence" value="ECO:0007669"/>
    <property type="project" value="UniProtKB-KW"/>
</dbReference>
<dbReference type="GO" id="GO:0048029">
    <property type="term" value="F:monosaccharide binding"/>
    <property type="evidence" value="ECO:0007669"/>
    <property type="project" value="TreeGrafter"/>
</dbReference>
<dbReference type="GO" id="GO:0061621">
    <property type="term" value="P:canonical glycolysis"/>
    <property type="evidence" value="ECO:0007669"/>
    <property type="project" value="TreeGrafter"/>
</dbReference>
<dbReference type="GO" id="GO:0030388">
    <property type="term" value="P:fructose 1,6-bisphosphate metabolic process"/>
    <property type="evidence" value="ECO:0007669"/>
    <property type="project" value="TreeGrafter"/>
</dbReference>
<dbReference type="GO" id="GO:0006002">
    <property type="term" value="P:fructose 6-phosphate metabolic process"/>
    <property type="evidence" value="ECO:0007669"/>
    <property type="project" value="InterPro"/>
</dbReference>
<dbReference type="CDD" id="cd00763">
    <property type="entry name" value="Bacterial_PFK"/>
    <property type="match status" value="1"/>
</dbReference>
<dbReference type="FunFam" id="3.40.50.450:FF:000001">
    <property type="entry name" value="ATP-dependent 6-phosphofructokinase"/>
    <property type="match status" value="1"/>
</dbReference>
<dbReference type="FunFam" id="3.40.50.460:FF:000002">
    <property type="entry name" value="ATP-dependent 6-phosphofructokinase"/>
    <property type="match status" value="1"/>
</dbReference>
<dbReference type="Gene3D" id="3.40.50.450">
    <property type="match status" value="1"/>
</dbReference>
<dbReference type="Gene3D" id="3.40.50.460">
    <property type="entry name" value="Phosphofructokinase domain"/>
    <property type="match status" value="1"/>
</dbReference>
<dbReference type="HAMAP" id="MF_00339">
    <property type="entry name" value="Phosphofructokinase_I_B1"/>
    <property type="match status" value="1"/>
</dbReference>
<dbReference type="InterPro" id="IPR022953">
    <property type="entry name" value="ATP_PFK"/>
</dbReference>
<dbReference type="InterPro" id="IPR012003">
    <property type="entry name" value="ATP_PFK_prok-type"/>
</dbReference>
<dbReference type="InterPro" id="IPR012828">
    <property type="entry name" value="PFKA_ATP_prok"/>
</dbReference>
<dbReference type="InterPro" id="IPR015912">
    <property type="entry name" value="Phosphofructokinase_CS"/>
</dbReference>
<dbReference type="InterPro" id="IPR000023">
    <property type="entry name" value="Phosphofructokinase_dom"/>
</dbReference>
<dbReference type="InterPro" id="IPR035966">
    <property type="entry name" value="PKF_sf"/>
</dbReference>
<dbReference type="NCBIfam" id="TIGR02482">
    <property type="entry name" value="PFKA_ATP"/>
    <property type="match status" value="1"/>
</dbReference>
<dbReference type="NCBIfam" id="NF002872">
    <property type="entry name" value="PRK03202.1"/>
    <property type="match status" value="1"/>
</dbReference>
<dbReference type="PANTHER" id="PTHR13697:SF4">
    <property type="entry name" value="ATP-DEPENDENT 6-PHOSPHOFRUCTOKINASE"/>
    <property type="match status" value="1"/>
</dbReference>
<dbReference type="PANTHER" id="PTHR13697">
    <property type="entry name" value="PHOSPHOFRUCTOKINASE"/>
    <property type="match status" value="1"/>
</dbReference>
<dbReference type="Pfam" id="PF00365">
    <property type="entry name" value="PFK"/>
    <property type="match status" value="1"/>
</dbReference>
<dbReference type="PIRSF" id="PIRSF000532">
    <property type="entry name" value="ATP_PFK_prok"/>
    <property type="match status" value="1"/>
</dbReference>
<dbReference type="PRINTS" id="PR00476">
    <property type="entry name" value="PHFRCTKINASE"/>
</dbReference>
<dbReference type="SUPFAM" id="SSF53784">
    <property type="entry name" value="Phosphofructokinase"/>
    <property type="match status" value="1"/>
</dbReference>
<dbReference type="PROSITE" id="PS00433">
    <property type="entry name" value="PHOSPHOFRUCTOKINASE"/>
    <property type="match status" value="1"/>
</dbReference>
<protein>
    <recommendedName>
        <fullName evidence="1">ATP-dependent 6-phosphofructokinase</fullName>
        <shortName evidence="1">ATP-PFK</shortName>
        <shortName evidence="1">Phosphofructokinase</shortName>
        <ecNumber evidence="1">2.7.1.11</ecNumber>
    </recommendedName>
    <alternativeName>
        <fullName evidence="1">Phosphohexokinase</fullName>
    </alternativeName>
</protein>
<proteinExistence type="inferred from homology"/>
<name>PFKA_SALCH</name>
<comment type="function">
    <text evidence="1">Catalyzes the phosphorylation of D-fructose 6-phosphate to fructose 1,6-bisphosphate by ATP, the first committing step of glycolysis.</text>
</comment>
<comment type="catalytic activity">
    <reaction evidence="1">
        <text>beta-D-fructose 6-phosphate + ATP = beta-D-fructose 1,6-bisphosphate + ADP + H(+)</text>
        <dbReference type="Rhea" id="RHEA:16109"/>
        <dbReference type="ChEBI" id="CHEBI:15378"/>
        <dbReference type="ChEBI" id="CHEBI:30616"/>
        <dbReference type="ChEBI" id="CHEBI:32966"/>
        <dbReference type="ChEBI" id="CHEBI:57634"/>
        <dbReference type="ChEBI" id="CHEBI:456216"/>
        <dbReference type="EC" id="2.7.1.11"/>
    </reaction>
</comment>
<comment type="cofactor">
    <cofactor evidence="1">
        <name>Mg(2+)</name>
        <dbReference type="ChEBI" id="CHEBI:18420"/>
    </cofactor>
</comment>
<comment type="activity regulation">
    <text evidence="1">Allosterically activated by ADP and other diphosphonucleosides, and allosterically inhibited by phosphoenolpyruvate.</text>
</comment>
<comment type="pathway">
    <text evidence="1">Carbohydrate degradation; glycolysis; D-glyceraldehyde 3-phosphate and glycerone phosphate from D-glucose: step 3/4.</text>
</comment>
<comment type="subunit">
    <text evidence="1">Homotetramer.</text>
</comment>
<comment type="subcellular location">
    <subcellularLocation>
        <location evidence="1">Cytoplasm</location>
    </subcellularLocation>
</comment>
<comment type="similarity">
    <text evidence="1">Belongs to the phosphofructokinase type A (PFKA) family. ATP-dependent PFK group I subfamily. Prokaryotic clade 'B1' sub-subfamily.</text>
</comment>
<gene>
    <name evidence="1" type="primary">pfkA</name>
    <name type="ordered locus">SCH_3953</name>
</gene>
<reference key="1">
    <citation type="journal article" date="2005" name="Nucleic Acids Res.">
        <title>The genome sequence of Salmonella enterica serovar Choleraesuis, a highly invasive and resistant zoonotic pathogen.</title>
        <authorList>
            <person name="Chiu C.-H."/>
            <person name="Tang P."/>
            <person name="Chu C."/>
            <person name="Hu S."/>
            <person name="Bao Q."/>
            <person name="Yu J."/>
            <person name="Chou Y.-Y."/>
            <person name="Wang H.-S."/>
            <person name="Lee Y.-S."/>
        </authorList>
    </citation>
    <scope>NUCLEOTIDE SEQUENCE [LARGE SCALE GENOMIC DNA]</scope>
    <source>
        <strain>SC-B67</strain>
    </source>
</reference>
<accession>Q57HF3</accession>
<feature type="chain" id="PRO_1000059785" description="ATP-dependent 6-phosphofructokinase">
    <location>
        <begin position="1"/>
        <end position="320"/>
    </location>
</feature>
<feature type="active site" description="Proton acceptor" evidence="1">
    <location>
        <position position="128"/>
    </location>
</feature>
<feature type="binding site" evidence="1">
    <location>
        <position position="12"/>
    </location>
    <ligand>
        <name>ATP</name>
        <dbReference type="ChEBI" id="CHEBI:30616"/>
    </ligand>
</feature>
<feature type="binding site" evidence="1">
    <location>
        <begin position="22"/>
        <end position="26"/>
    </location>
    <ligand>
        <name>ADP</name>
        <dbReference type="ChEBI" id="CHEBI:456216"/>
        <note>allosteric activator; ligand shared between dimeric partners</note>
    </ligand>
</feature>
<feature type="binding site" evidence="1">
    <location>
        <begin position="55"/>
        <end position="60"/>
    </location>
    <ligand>
        <name>ADP</name>
        <dbReference type="ChEBI" id="CHEBI:456216"/>
        <note>allosteric activator; ligand shared between dimeric partners</note>
    </ligand>
</feature>
<feature type="binding site" evidence="1">
    <location>
        <begin position="73"/>
        <end position="74"/>
    </location>
    <ligand>
        <name>ATP</name>
        <dbReference type="ChEBI" id="CHEBI:30616"/>
    </ligand>
</feature>
<feature type="binding site" evidence="1">
    <location>
        <begin position="103"/>
        <end position="106"/>
    </location>
    <ligand>
        <name>ATP</name>
        <dbReference type="ChEBI" id="CHEBI:30616"/>
    </ligand>
</feature>
<feature type="binding site" evidence="1">
    <location>
        <position position="104"/>
    </location>
    <ligand>
        <name>Mg(2+)</name>
        <dbReference type="ChEBI" id="CHEBI:18420"/>
        <note>catalytic</note>
    </ligand>
</feature>
<feature type="binding site" description="in other chain" evidence="1">
    <location>
        <begin position="126"/>
        <end position="128"/>
    </location>
    <ligand>
        <name>substrate</name>
        <note>ligand shared between dimeric partners</note>
    </ligand>
</feature>
<feature type="binding site" description="in other chain" evidence="1">
    <location>
        <position position="155"/>
    </location>
    <ligand>
        <name>ADP</name>
        <dbReference type="ChEBI" id="CHEBI:456216"/>
        <note>allosteric activator; ligand shared between dimeric partners</note>
    </ligand>
</feature>
<feature type="binding site" evidence="1">
    <location>
        <position position="163"/>
    </location>
    <ligand>
        <name>substrate</name>
        <note>ligand shared between dimeric partners</note>
    </ligand>
</feature>
<feature type="binding site" description="in other chain" evidence="1">
    <location>
        <begin position="170"/>
        <end position="172"/>
    </location>
    <ligand>
        <name>substrate</name>
        <note>ligand shared between dimeric partners</note>
    </ligand>
</feature>
<feature type="binding site" description="in other chain" evidence="1">
    <location>
        <begin position="186"/>
        <end position="188"/>
    </location>
    <ligand>
        <name>ADP</name>
        <dbReference type="ChEBI" id="CHEBI:456216"/>
        <note>allosteric activator; ligand shared between dimeric partners</note>
    </ligand>
</feature>
<feature type="binding site" description="in other chain" evidence="1">
    <location>
        <position position="212"/>
    </location>
    <ligand>
        <name>ADP</name>
        <dbReference type="ChEBI" id="CHEBI:456216"/>
        <note>allosteric activator; ligand shared between dimeric partners</note>
    </ligand>
</feature>
<feature type="binding site" description="in other chain" evidence="1">
    <location>
        <begin position="214"/>
        <end position="216"/>
    </location>
    <ligand>
        <name>ADP</name>
        <dbReference type="ChEBI" id="CHEBI:456216"/>
        <note>allosteric activator; ligand shared between dimeric partners</note>
    </ligand>
</feature>
<feature type="binding site" description="in other chain" evidence="1">
    <location>
        <position position="223"/>
    </location>
    <ligand>
        <name>substrate</name>
        <note>ligand shared between dimeric partners</note>
    </ligand>
</feature>
<feature type="binding site" evidence="1">
    <location>
        <position position="244"/>
    </location>
    <ligand>
        <name>substrate</name>
        <note>ligand shared between dimeric partners</note>
    </ligand>
</feature>
<feature type="binding site" description="in other chain" evidence="1">
    <location>
        <begin position="250"/>
        <end position="253"/>
    </location>
    <ligand>
        <name>substrate</name>
        <note>ligand shared between dimeric partners</note>
    </ligand>
</feature>
<organism>
    <name type="scientific">Salmonella choleraesuis (strain SC-B67)</name>
    <dbReference type="NCBI Taxonomy" id="321314"/>
    <lineage>
        <taxon>Bacteria</taxon>
        <taxon>Pseudomonadati</taxon>
        <taxon>Pseudomonadota</taxon>
        <taxon>Gammaproteobacteria</taxon>
        <taxon>Enterobacterales</taxon>
        <taxon>Enterobacteriaceae</taxon>
        <taxon>Salmonella</taxon>
    </lineage>
</organism>